<accession>A4VIX7</accession>
<evidence type="ECO:0000255" key="1">
    <source>
        <dbReference type="HAMAP-Rule" id="MF_00201"/>
    </source>
</evidence>
<protein>
    <recommendedName>
        <fullName evidence="1">DNA repair protein RecO</fullName>
    </recommendedName>
    <alternativeName>
        <fullName evidence="1">Recombination protein O</fullName>
    </alternativeName>
</protein>
<feature type="chain" id="PRO_0000325208" description="DNA repair protein RecO">
    <location>
        <begin position="1"/>
        <end position="236"/>
    </location>
</feature>
<comment type="function">
    <text evidence="1">Involved in DNA repair and RecF pathway recombination.</text>
</comment>
<comment type="similarity">
    <text evidence="1">Belongs to the RecO family.</text>
</comment>
<reference key="1">
    <citation type="journal article" date="2008" name="Proc. Natl. Acad. Sci. U.S.A.">
        <title>Nitrogen fixation island and rhizosphere competence traits in the genome of root-associated Pseudomonas stutzeri A1501.</title>
        <authorList>
            <person name="Yan Y."/>
            <person name="Yang J."/>
            <person name="Dou Y."/>
            <person name="Chen M."/>
            <person name="Ping S."/>
            <person name="Peng J."/>
            <person name="Lu W."/>
            <person name="Zhang W."/>
            <person name="Yao Z."/>
            <person name="Li H."/>
            <person name="Liu W."/>
            <person name="He S."/>
            <person name="Geng L."/>
            <person name="Zhang X."/>
            <person name="Yang F."/>
            <person name="Yu H."/>
            <person name="Zhan Y."/>
            <person name="Li D."/>
            <person name="Lin Z."/>
            <person name="Wang Y."/>
            <person name="Elmerich C."/>
            <person name="Lin M."/>
            <person name="Jin Q."/>
        </authorList>
    </citation>
    <scope>NUCLEOTIDE SEQUENCE [LARGE SCALE GENOMIC DNA]</scope>
    <source>
        <strain>A1501</strain>
    </source>
</reference>
<sequence length="236" mass="26139">MRTPWAAMHQPAFVLHSRPYKESSALVDLFTPQGRLRAVMRAARGKAGSLIRPFVSLEVELRGKSELKTVARLESAGPAHWLDGQALFSGMYLNELLIRLLPAEDAHPALFEHYVATLPALAEHRPLEPLLRAFEWRLLDELGYGFALDIDIAGQPIDAQRLYRLVPDAGLEPVVGFQPGLFNGAELLAMAEADWQVPGALAAAKRLMRQALAPHLGGRPLVSRELFMNLKESPRD</sequence>
<gene>
    <name evidence="1" type="primary">recO</name>
    <name type="ordered locus">PST_1233</name>
</gene>
<dbReference type="EMBL" id="CP000304">
    <property type="protein sequence ID" value="ABP78928.1"/>
    <property type="molecule type" value="Genomic_DNA"/>
</dbReference>
<dbReference type="SMR" id="A4VIX7"/>
<dbReference type="KEGG" id="psa:PST_1233"/>
<dbReference type="eggNOG" id="COG1381">
    <property type="taxonomic scope" value="Bacteria"/>
</dbReference>
<dbReference type="HOGENOM" id="CLU_066645_1_0_6"/>
<dbReference type="Proteomes" id="UP000000233">
    <property type="component" value="Chromosome"/>
</dbReference>
<dbReference type="GO" id="GO:0043590">
    <property type="term" value="C:bacterial nucleoid"/>
    <property type="evidence" value="ECO:0007669"/>
    <property type="project" value="TreeGrafter"/>
</dbReference>
<dbReference type="GO" id="GO:0006310">
    <property type="term" value="P:DNA recombination"/>
    <property type="evidence" value="ECO:0007669"/>
    <property type="project" value="UniProtKB-UniRule"/>
</dbReference>
<dbReference type="GO" id="GO:0006302">
    <property type="term" value="P:double-strand break repair"/>
    <property type="evidence" value="ECO:0007669"/>
    <property type="project" value="TreeGrafter"/>
</dbReference>
<dbReference type="Gene3D" id="2.40.50.140">
    <property type="entry name" value="Nucleic acid-binding proteins"/>
    <property type="match status" value="1"/>
</dbReference>
<dbReference type="Gene3D" id="1.20.1440.120">
    <property type="entry name" value="Recombination protein O, C-terminal domain"/>
    <property type="match status" value="1"/>
</dbReference>
<dbReference type="HAMAP" id="MF_00201">
    <property type="entry name" value="RecO"/>
    <property type="match status" value="1"/>
</dbReference>
<dbReference type="InterPro" id="IPR037278">
    <property type="entry name" value="ARFGAP/RecO"/>
</dbReference>
<dbReference type="InterPro" id="IPR022572">
    <property type="entry name" value="DNA_rep/recomb_RecO_N"/>
</dbReference>
<dbReference type="InterPro" id="IPR012340">
    <property type="entry name" value="NA-bd_OB-fold"/>
</dbReference>
<dbReference type="InterPro" id="IPR003717">
    <property type="entry name" value="RecO"/>
</dbReference>
<dbReference type="InterPro" id="IPR042242">
    <property type="entry name" value="RecO_C"/>
</dbReference>
<dbReference type="NCBIfam" id="TIGR00613">
    <property type="entry name" value="reco"/>
    <property type="match status" value="1"/>
</dbReference>
<dbReference type="PANTHER" id="PTHR33991">
    <property type="entry name" value="DNA REPAIR PROTEIN RECO"/>
    <property type="match status" value="1"/>
</dbReference>
<dbReference type="PANTHER" id="PTHR33991:SF1">
    <property type="entry name" value="DNA REPAIR PROTEIN RECO"/>
    <property type="match status" value="1"/>
</dbReference>
<dbReference type="Pfam" id="PF02565">
    <property type="entry name" value="RecO_C"/>
    <property type="match status" value="1"/>
</dbReference>
<dbReference type="Pfam" id="PF11967">
    <property type="entry name" value="RecO_N"/>
    <property type="match status" value="1"/>
</dbReference>
<dbReference type="SUPFAM" id="SSF57863">
    <property type="entry name" value="ArfGap/RecO-like zinc finger"/>
    <property type="match status" value="1"/>
</dbReference>
<dbReference type="SUPFAM" id="SSF50249">
    <property type="entry name" value="Nucleic acid-binding proteins"/>
    <property type="match status" value="1"/>
</dbReference>
<name>RECO_STUS1</name>
<keyword id="KW-0227">DNA damage</keyword>
<keyword id="KW-0233">DNA recombination</keyword>
<keyword id="KW-0234">DNA repair</keyword>
<keyword id="KW-1185">Reference proteome</keyword>
<proteinExistence type="inferred from homology"/>
<organism>
    <name type="scientific">Stutzerimonas stutzeri (strain A1501)</name>
    <name type="common">Pseudomonas stutzeri</name>
    <dbReference type="NCBI Taxonomy" id="379731"/>
    <lineage>
        <taxon>Bacteria</taxon>
        <taxon>Pseudomonadati</taxon>
        <taxon>Pseudomonadota</taxon>
        <taxon>Gammaproteobacteria</taxon>
        <taxon>Pseudomonadales</taxon>
        <taxon>Pseudomonadaceae</taxon>
        <taxon>Stutzerimonas</taxon>
    </lineage>
</organism>